<sequence length="114" mass="12100">MSDDVALPLEFTDAAANKVKSLIADEDNPNLKLRVYITGGGCSGFQYGFTFDDQVNEGDMTIEKQGVGLVVDPMSLQYLVGGSVDYTEGLEGSRFIVTNPNAKSTCGCGSSFSI</sequence>
<feature type="chain" id="PRO_1000144912" description="Iron-sulfur cluster insertion protein ErpA">
    <location>
        <begin position="1"/>
        <end position="114"/>
    </location>
</feature>
<feature type="binding site" evidence="1">
    <location>
        <position position="42"/>
    </location>
    <ligand>
        <name>iron-sulfur cluster</name>
        <dbReference type="ChEBI" id="CHEBI:30408"/>
    </ligand>
</feature>
<feature type="binding site" evidence="1">
    <location>
        <position position="106"/>
    </location>
    <ligand>
        <name>iron-sulfur cluster</name>
        <dbReference type="ChEBI" id="CHEBI:30408"/>
    </ligand>
</feature>
<feature type="binding site" evidence="1">
    <location>
        <position position="108"/>
    </location>
    <ligand>
        <name>iron-sulfur cluster</name>
        <dbReference type="ChEBI" id="CHEBI:30408"/>
    </ligand>
</feature>
<keyword id="KW-0408">Iron</keyword>
<keyword id="KW-0411">Iron-sulfur</keyword>
<keyword id="KW-0479">Metal-binding</keyword>
<evidence type="ECO:0000255" key="1">
    <source>
        <dbReference type="HAMAP-Rule" id="MF_01380"/>
    </source>
</evidence>
<proteinExistence type="inferred from homology"/>
<comment type="function">
    <text evidence="1">Required for insertion of 4Fe-4S clusters for at least IspG.</text>
</comment>
<comment type="cofactor">
    <cofactor evidence="1">
        <name>iron-sulfur cluster</name>
        <dbReference type="ChEBI" id="CHEBI:30408"/>
    </cofactor>
    <text evidence="1">Binds 1 iron-sulfur cluster per subunit.</text>
</comment>
<comment type="subunit">
    <text evidence="1">Homodimer.</text>
</comment>
<comment type="similarity">
    <text evidence="1">Belongs to the HesB/IscA family.</text>
</comment>
<accession>A7ZWA4</accession>
<gene>
    <name evidence="1" type="primary">erpA</name>
    <name type="ordered locus">EcHS_A0160</name>
</gene>
<dbReference type="EMBL" id="CP000802">
    <property type="protein sequence ID" value="ABV04558.1"/>
    <property type="molecule type" value="Genomic_DNA"/>
</dbReference>
<dbReference type="RefSeq" id="WP_001295564.1">
    <property type="nucleotide sequence ID" value="NC_009800.1"/>
</dbReference>
<dbReference type="SMR" id="A7ZWA4"/>
<dbReference type="GeneID" id="93777270"/>
<dbReference type="KEGG" id="ecx:EcHS_A0160"/>
<dbReference type="HOGENOM" id="CLU_069054_5_3_6"/>
<dbReference type="GO" id="GO:0005829">
    <property type="term" value="C:cytosol"/>
    <property type="evidence" value="ECO:0007669"/>
    <property type="project" value="TreeGrafter"/>
</dbReference>
<dbReference type="GO" id="GO:0051537">
    <property type="term" value="F:2 iron, 2 sulfur cluster binding"/>
    <property type="evidence" value="ECO:0007669"/>
    <property type="project" value="UniProtKB-ARBA"/>
</dbReference>
<dbReference type="GO" id="GO:0051539">
    <property type="term" value="F:4 iron, 4 sulfur cluster binding"/>
    <property type="evidence" value="ECO:0007669"/>
    <property type="project" value="TreeGrafter"/>
</dbReference>
<dbReference type="GO" id="GO:0005506">
    <property type="term" value="F:iron ion binding"/>
    <property type="evidence" value="ECO:0007669"/>
    <property type="project" value="UniProtKB-UniRule"/>
</dbReference>
<dbReference type="GO" id="GO:0016226">
    <property type="term" value="P:iron-sulfur cluster assembly"/>
    <property type="evidence" value="ECO:0007669"/>
    <property type="project" value="UniProtKB-UniRule"/>
</dbReference>
<dbReference type="FunFam" id="2.60.300.12:FF:000002">
    <property type="entry name" value="Iron-sulfur cluster insertion protein ErpA"/>
    <property type="match status" value="1"/>
</dbReference>
<dbReference type="Gene3D" id="2.60.300.12">
    <property type="entry name" value="HesB-like domain"/>
    <property type="match status" value="1"/>
</dbReference>
<dbReference type="HAMAP" id="MF_01380">
    <property type="entry name" value="Fe_S_insert_ErpA"/>
    <property type="match status" value="1"/>
</dbReference>
<dbReference type="InterPro" id="IPR000361">
    <property type="entry name" value="FeS_biogenesis"/>
</dbReference>
<dbReference type="InterPro" id="IPR016092">
    <property type="entry name" value="FeS_cluster_insertion"/>
</dbReference>
<dbReference type="InterPro" id="IPR017870">
    <property type="entry name" value="FeS_cluster_insertion_CS"/>
</dbReference>
<dbReference type="InterPro" id="IPR023063">
    <property type="entry name" value="FeS_cluster_insertion_RrpA"/>
</dbReference>
<dbReference type="InterPro" id="IPR035903">
    <property type="entry name" value="HesB-like_dom_sf"/>
</dbReference>
<dbReference type="NCBIfam" id="TIGR00049">
    <property type="entry name" value="iron-sulfur cluster assembly accessory protein"/>
    <property type="match status" value="1"/>
</dbReference>
<dbReference type="NCBIfam" id="NF010147">
    <property type="entry name" value="PRK13623.1"/>
    <property type="match status" value="1"/>
</dbReference>
<dbReference type="PANTHER" id="PTHR43011">
    <property type="entry name" value="IRON-SULFUR CLUSTER ASSEMBLY 2 HOMOLOG, MITOCHONDRIAL"/>
    <property type="match status" value="1"/>
</dbReference>
<dbReference type="PANTHER" id="PTHR43011:SF1">
    <property type="entry name" value="IRON-SULFUR CLUSTER ASSEMBLY 2 HOMOLOG, MITOCHONDRIAL"/>
    <property type="match status" value="1"/>
</dbReference>
<dbReference type="Pfam" id="PF01521">
    <property type="entry name" value="Fe-S_biosyn"/>
    <property type="match status" value="1"/>
</dbReference>
<dbReference type="SUPFAM" id="SSF89360">
    <property type="entry name" value="HesB-like domain"/>
    <property type="match status" value="1"/>
</dbReference>
<dbReference type="PROSITE" id="PS01152">
    <property type="entry name" value="HESB"/>
    <property type="match status" value="1"/>
</dbReference>
<name>ERPA_ECOHS</name>
<protein>
    <recommendedName>
        <fullName evidence="1">Iron-sulfur cluster insertion protein ErpA</fullName>
    </recommendedName>
</protein>
<reference key="1">
    <citation type="journal article" date="2008" name="J. Bacteriol.">
        <title>The pangenome structure of Escherichia coli: comparative genomic analysis of E. coli commensal and pathogenic isolates.</title>
        <authorList>
            <person name="Rasko D.A."/>
            <person name="Rosovitz M.J."/>
            <person name="Myers G.S.A."/>
            <person name="Mongodin E.F."/>
            <person name="Fricke W.F."/>
            <person name="Gajer P."/>
            <person name="Crabtree J."/>
            <person name="Sebaihia M."/>
            <person name="Thomson N.R."/>
            <person name="Chaudhuri R."/>
            <person name="Henderson I.R."/>
            <person name="Sperandio V."/>
            <person name="Ravel J."/>
        </authorList>
    </citation>
    <scope>NUCLEOTIDE SEQUENCE [LARGE SCALE GENOMIC DNA]</scope>
    <source>
        <strain>HS</strain>
    </source>
</reference>
<organism>
    <name type="scientific">Escherichia coli O9:H4 (strain HS)</name>
    <dbReference type="NCBI Taxonomy" id="331112"/>
    <lineage>
        <taxon>Bacteria</taxon>
        <taxon>Pseudomonadati</taxon>
        <taxon>Pseudomonadota</taxon>
        <taxon>Gammaproteobacteria</taxon>
        <taxon>Enterobacterales</taxon>
        <taxon>Enterobacteriaceae</taxon>
        <taxon>Escherichia</taxon>
    </lineage>
</organism>